<feature type="chain" id="PRO_0000440167" description="E3 ubiquitin-protein ligase RFI2">
    <location>
        <begin position="1"/>
        <end position="358"/>
    </location>
</feature>
<feature type="zinc finger region" description="RING-type; atypical" evidence="1">
    <location>
        <begin position="38"/>
        <end position="83"/>
    </location>
</feature>
<feature type="region of interest" description="Disordered" evidence="2">
    <location>
        <begin position="1"/>
        <end position="34"/>
    </location>
</feature>
<feature type="region of interest" description="Disordered" evidence="2">
    <location>
        <begin position="174"/>
        <end position="201"/>
    </location>
</feature>
<feature type="region of interest" description="Disordered" evidence="2">
    <location>
        <begin position="248"/>
        <end position="313"/>
    </location>
</feature>
<feature type="compositionally biased region" description="Basic and acidic residues" evidence="2">
    <location>
        <begin position="187"/>
        <end position="201"/>
    </location>
</feature>
<feature type="compositionally biased region" description="Polar residues" evidence="2">
    <location>
        <begin position="248"/>
        <end position="266"/>
    </location>
</feature>
<feature type="compositionally biased region" description="Pro residues" evidence="2">
    <location>
        <begin position="299"/>
        <end position="309"/>
    </location>
</feature>
<feature type="splice variant" id="VSP_058959" description="In isoform 2.">
    <original>SNQRSSPAINSYQGSSTQMREQHHA</original>
    <variation>LASQTPYCSQLLAECFTIFFWNWAL</variation>
    <location>
        <begin position="248"/>
        <end position="272"/>
    </location>
</feature>
<feature type="splice variant" id="VSP_058960" description="In isoform 2.">
    <location>
        <begin position="273"/>
        <end position="358"/>
    </location>
</feature>
<organism>
    <name type="scientific">Arabidopsis thaliana</name>
    <name type="common">Mouse-ear cress</name>
    <dbReference type="NCBI Taxonomy" id="3702"/>
    <lineage>
        <taxon>Eukaryota</taxon>
        <taxon>Viridiplantae</taxon>
        <taxon>Streptophyta</taxon>
        <taxon>Embryophyta</taxon>
        <taxon>Tracheophyta</taxon>
        <taxon>Spermatophyta</taxon>
        <taxon>Magnoliopsida</taxon>
        <taxon>eudicotyledons</taxon>
        <taxon>Gunneridae</taxon>
        <taxon>Pentapetalae</taxon>
        <taxon>rosids</taxon>
        <taxon>malvids</taxon>
        <taxon>Brassicales</taxon>
        <taxon>Brassicaceae</taxon>
        <taxon>Camelineae</taxon>
        <taxon>Arabidopsis</taxon>
    </lineage>
</organism>
<gene>
    <name evidence="6" type="primary">RFI2</name>
    <name evidence="8" type="ordered locus">At2g47700</name>
    <name evidence="9" type="ORF">F17A22.9</name>
</gene>
<dbReference type="EC" id="2.3.2.27" evidence="3"/>
<dbReference type="EMBL" id="DQ086859">
    <property type="protein sequence ID" value="AAZ14075.1"/>
    <property type="molecule type" value="mRNA"/>
</dbReference>
<dbReference type="EMBL" id="AC005309">
    <property type="protein sequence ID" value="AAC63626.2"/>
    <property type="molecule type" value="Genomic_DNA"/>
</dbReference>
<dbReference type="EMBL" id="CP002685">
    <property type="protein sequence ID" value="AEC10878.1"/>
    <property type="molecule type" value="Genomic_DNA"/>
</dbReference>
<dbReference type="EMBL" id="CP002685">
    <property type="protein sequence ID" value="ANM62259.1"/>
    <property type="molecule type" value="Genomic_DNA"/>
</dbReference>
<dbReference type="EMBL" id="BT002412">
    <property type="protein sequence ID" value="AAO00772.1"/>
    <property type="molecule type" value="mRNA"/>
</dbReference>
<dbReference type="EMBL" id="BT008845">
    <property type="protein sequence ID" value="AAP68284.1"/>
    <property type="molecule type" value="mRNA"/>
</dbReference>
<dbReference type="PIR" id="E84918">
    <property type="entry name" value="E84918"/>
</dbReference>
<dbReference type="RefSeq" id="NP_001324431.1">
    <molecule id="O82239-2"/>
    <property type="nucleotide sequence ID" value="NM_001337272.1"/>
</dbReference>
<dbReference type="RefSeq" id="NP_850478.1">
    <molecule id="O82239-1"/>
    <property type="nucleotide sequence ID" value="NM_180147.3"/>
</dbReference>
<dbReference type="SMR" id="O82239"/>
<dbReference type="FunCoup" id="O82239">
    <property type="interactions" value="6"/>
</dbReference>
<dbReference type="IntAct" id="O82239">
    <property type="interactions" value="52"/>
</dbReference>
<dbReference type="STRING" id="3702.O82239"/>
<dbReference type="PaxDb" id="3702-AT2G47700.1"/>
<dbReference type="EnsemblPlants" id="AT2G47700.1">
    <molecule id="O82239-1"/>
    <property type="protein sequence ID" value="AT2G47700.1"/>
    <property type="gene ID" value="AT2G47700"/>
</dbReference>
<dbReference type="EnsemblPlants" id="AT2G47700.2">
    <molecule id="O82239-2"/>
    <property type="protein sequence ID" value="AT2G47700.2"/>
    <property type="gene ID" value="AT2G47700"/>
</dbReference>
<dbReference type="GeneID" id="819383"/>
<dbReference type="Gramene" id="AT2G47700.1">
    <molecule id="O82239-1"/>
    <property type="protein sequence ID" value="AT2G47700.1"/>
    <property type="gene ID" value="AT2G47700"/>
</dbReference>
<dbReference type="Gramene" id="AT2G47700.2">
    <molecule id="O82239-2"/>
    <property type="protein sequence ID" value="AT2G47700.2"/>
    <property type="gene ID" value="AT2G47700"/>
</dbReference>
<dbReference type="KEGG" id="ath:AT2G47700"/>
<dbReference type="Araport" id="AT2G47700"/>
<dbReference type="TAIR" id="AT2G47700">
    <property type="gene designation" value="RFI2"/>
</dbReference>
<dbReference type="eggNOG" id="ENOG502SJ7I">
    <property type="taxonomic scope" value="Eukaryota"/>
</dbReference>
<dbReference type="HOGENOM" id="CLU_037685_0_0_1"/>
<dbReference type="InParanoid" id="O82239"/>
<dbReference type="OMA" id="QHHANGP"/>
<dbReference type="OrthoDB" id="8062037at2759"/>
<dbReference type="PhylomeDB" id="O82239"/>
<dbReference type="UniPathway" id="UPA00143"/>
<dbReference type="PRO" id="PR:O82239"/>
<dbReference type="Proteomes" id="UP000006548">
    <property type="component" value="Chromosome 2"/>
</dbReference>
<dbReference type="ExpressionAtlas" id="O82239">
    <property type="expression patterns" value="baseline and differential"/>
</dbReference>
<dbReference type="GO" id="GO:0005634">
    <property type="term" value="C:nucleus"/>
    <property type="evidence" value="ECO:0000314"/>
    <property type="project" value="UniProtKB"/>
</dbReference>
<dbReference type="GO" id="GO:0004842">
    <property type="term" value="F:ubiquitin-protein transferase activity"/>
    <property type="evidence" value="ECO:0000314"/>
    <property type="project" value="TAIR"/>
</dbReference>
<dbReference type="GO" id="GO:0008270">
    <property type="term" value="F:zinc ion binding"/>
    <property type="evidence" value="ECO:0007669"/>
    <property type="project" value="UniProtKB-KW"/>
</dbReference>
<dbReference type="GO" id="GO:0007623">
    <property type="term" value="P:circadian rhythm"/>
    <property type="evidence" value="ECO:0000270"/>
    <property type="project" value="UniProtKB"/>
</dbReference>
<dbReference type="GO" id="GO:0009908">
    <property type="term" value="P:flower development"/>
    <property type="evidence" value="ECO:0007669"/>
    <property type="project" value="UniProtKB-KW"/>
</dbReference>
<dbReference type="GO" id="GO:0010629">
    <property type="term" value="P:negative regulation of gene expression"/>
    <property type="evidence" value="ECO:0000315"/>
    <property type="project" value="UniProtKB"/>
</dbReference>
<dbReference type="GO" id="GO:0016567">
    <property type="term" value="P:protein ubiquitination"/>
    <property type="evidence" value="ECO:0007669"/>
    <property type="project" value="UniProtKB-UniPathway"/>
</dbReference>
<dbReference type="GO" id="GO:0009585">
    <property type="term" value="P:red, far-red light phototransduction"/>
    <property type="evidence" value="ECO:0007669"/>
    <property type="project" value="UniProtKB-KW"/>
</dbReference>
<dbReference type="GO" id="GO:0010468">
    <property type="term" value="P:regulation of gene expression"/>
    <property type="evidence" value="ECO:0000315"/>
    <property type="project" value="UniProtKB"/>
</dbReference>
<dbReference type="GO" id="GO:2000028">
    <property type="term" value="P:regulation of photoperiodism, flowering"/>
    <property type="evidence" value="ECO:0000315"/>
    <property type="project" value="UniProtKB"/>
</dbReference>
<dbReference type="GO" id="GO:0090227">
    <property type="term" value="P:regulation of red or far-red light signaling pathway"/>
    <property type="evidence" value="ECO:0000315"/>
    <property type="project" value="UniProtKB"/>
</dbReference>
<dbReference type="GO" id="GO:0010218">
    <property type="term" value="P:response to far red light"/>
    <property type="evidence" value="ECO:0000315"/>
    <property type="project" value="UniProtKB"/>
</dbReference>
<dbReference type="GO" id="GO:0010114">
    <property type="term" value="P:response to red light"/>
    <property type="evidence" value="ECO:0000315"/>
    <property type="project" value="UniProtKB"/>
</dbReference>
<dbReference type="Gene3D" id="3.30.40.10">
    <property type="entry name" value="Zinc/RING finger domain, C3HC4 (zinc finger)"/>
    <property type="match status" value="1"/>
</dbReference>
<dbReference type="InterPro" id="IPR044274">
    <property type="entry name" value="RFI2"/>
</dbReference>
<dbReference type="InterPro" id="IPR001841">
    <property type="entry name" value="Znf_RING"/>
</dbReference>
<dbReference type="InterPro" id="IPR013083">
    <property type="entry name" value="Znf_RING/FYVE/PHD"/>
</dbReference>
<dbReference type="PANTHER" id="PTHR46798:SF5">
    <property type="entry name" value="E3 UBIQUITIN-PROTEIN LIGASE RFI2"/>
    <property type="match status" value="1"/>
</dbReference>
<dbReference type="PANTHER" id="PTHR46798">
    <property type="entry name" value="OS09G0511500 PROTEIN"/>
    <property type="match status" value="1"/>
</dbReference>
<dbReference type="Pfam" id="PF13639">
    <property type="entry name" value="zf-RING_2"/>
    <property type="match status" value="1"/>
</dbReference>
<dbReference type="SMART" id="SM00184">
    <property type="entry name" value="RING"/>
    <property type="match status" value="1"/>
</dbReference>
<dbReference type="SUPFAM" id="SSF57850">
    <property type="entry name" value="RING/U-box"/>
    <property type="match status" value="1"/>
</dbReference>
<dbReference type="PROSITE" id="PS50089">
    <property type="entry name" value="ZF_RING_2"/>
    <property type="match status" value="1"/>
</dbReference>
<keyword id="KW-0025">Alternative splicing</keyword>
<keyword id="KW-0090">Biological rhythms</keyword>
<keyword id="KW-0287">Flowering</keyword>
<keyword id="KW-0479">Metal-binding</keyword>
<keyword id="KW-0539">Nucleus</keyword>
<keyword id="KW-0607">Phytochrome signaling pathway</keyword>
<keyword id="KW-1185">Reference proteome</keyword>
<keyword id="KW-0808">Transferase</keyword>
<keyword id="KW-0833">Ubl conjugation pathway</keyword>
<keyword id="KW-0862">Zinc</keyword>
<keyword id="KW-0863">Zinc-finger</keyword>
<evidence type="ECO:0000255" key="1">
    <source>
        <dbReference type="PROSITE-ProRule" id="PRU00175"/>
    </source>
</evidence>
<evidence type="ECO:0000256" key="2">
    <source>
        <dbReference type="SAM" id="MobiDB-lite"/>
    </source>
</evidence>
<evidence type="ECO:0000269" key="3">
    <source>
    </source>
</evidence>
<evidence type="ECO:0000269" key="4">
    <source>
    </source>
</evidence>
<evidence type="ECO:0000269" key="5">
    <source>
    </source>
</evidence>
<evidence type="ECO:0000303" key="6">
    <source>
    </source>
</evidence>
<evidence type="ECO:0000305" key="7">
    <source>
    </source>
</evidence>
<evidence type="ECO:0000312" key="8">
    <source>
        <dbReference type="Araport" id="AT2G47700"/>
    </source>
</evidence>
<evidence type="ECO:0000312" key="9">
    <source>
        <dbReference type="EMBL" id="AAC63626.2"/>
    </source>
</evidence>
<comment type="function">
    <text evidence="4 5">Mediates phytochrome (phyA and phyB)-controlled seedling deetiolation responses such as hypocotyl elongation in response to red and far-red light (PubMed:16384903, PubMed:16709197). Required for light-induced expression of LHCB3 and CHALCONE SYNTHASE (CHS) (PubMed:16384903). Negatively regulates CONSTANS (CO) and FLOWERING LOCUS T (FT) expression and photoperiodic flowering (PubMed:16709197).</text>
</comment>
<comment type="catalytic activity">
    <reaction evidence="3">
        <text>S-ubiquitinyl-[E2 ubiquitin-conjugating enzyme]-L-cysteine + [acceptor protein]-L-lysine = [E2 ubiquitin-conjugating enzyme]-L-cysteine + N(6)-ubiquitinyl-[acceptor protein]-L-lysine.</text>
        <dbReference type="EC" id="2.3.2.27"/>
    </reaction>
</comment>
<comment type="pathway">
    <text evidence="7">Protein modification; protein ubiquitination.</text>
</comment>
<comment type="interaction">
    <interactant intactId="EBI-4425094">
        <id>O82239</id>
    </interactant>
    <interactant intactId="EBI-962511">
        <id>A9LNK9</id>
        <label>CPSF30</label>
    </interactant>
    <organismsDiffer>false</organismsDiffer>
    <experiments>3</experiments>
</comment>
<comment type="interaction">
    <interactant intactId="EBI-4425094">
        <id>O82239</id>
    </interactant>
    <interactant intactId="EBI-4446727">
        <id>Q94ID6</id>
        <label>ERF12</label>
    </interactant>
    <organismsDiffer>false</organismsDiffer>
    <experiments>3</experiments>
</comment>
<comment type="interaction">
    <interactant intactId="EBI-4425094">
        <id>O82239</id>
    </interactant>
    <interactant intactId="EBI-2000137">
        <id>Q9MAI5</id>
        <label>ERF8</label>
    </interactant>
    <organismsDiffer>false</organismsDiffer>
    <experiments>3</experiments>
</comment>
<comment type="interaction">
    <interactant intactId="EBI-4425094">
        <id>O82239</id>
    </interactant>
    <interactant intactId="EBI-15195983">
        <id>Q84WI0</id>
        <label>GIS</label>
    </interactant>
    <organismsDiffer>false</organismsDiffer>
    <experiments>3</experiments>
</comment>
<comment type="interaction">
    <interactant intactId="EBI-4425094">
        <id>O82239</id>
    </interactant>
    <interactant intactId="EBI-3946459">
        <id>Q9C5X0</id>
        <label>IAA34</label>
    </interactant>
    <organismsDiffer>false</organismsDiffer>
    <experiments>3</experiments>
</comment>
<comment type="interaction">
    <interactant intactId="EBI-4425094">
        <id>O82239</id>
    </interactant>
    <interactant intactId="EBI-15193025">
        <id>Q9LXU1</id>
        <label>NOT9B</label>
    </interactant>
    <organismsDiffer>false</organismsDiffer>
    <experiments>3</experiments>
</comment>
<comment type="interaction">
    <interactant intactId="EBI-4425094">
        <id>O82239</id>
    </interactant>
    <interactant intactId="EBI-4424877">
        <id>Q9S7W5</id>
        <label>TCP13</label>
    </interactant>
    <organismsDiffer>false</organismsDiffer>
    <experiments>3</experiments>
</comment>
<comment type="interaction">
    <interactant intactId="EBI-4425094">
        <id>O82239</id>
    </interactant>
    <interactant intactId="EBI-4426144">
        <id>Q9C9L2</id>
        <label>TCP15</label>
    </interactant>
    <organismsDiffer>false</organismsDiffer>
    <experiments>3</experiments>
</comment>
<comment type="interaction">
    <interactant intactId="EBI-4425094">
        <id>O82239</id>
    </interactant>
    <interactant intactId="EBI-4424568">
        <id>Q9LVG2</id>
        <label>TOE2</label>
    </interactant>
    <organismsDiffer>false</organismsDiffer>
    <experiments>3</experiments>
</comment>
<comment type="interaction">
    <interactant intactId="EBI-4425094">
        <id>O82239</id>
    </interactant>
    <interactant intactId="EBI-15200178">
        <id>Q39262</id>
        <label>ZFP3</label>
    </interactant>
    <organismsDiffer>false</organismsDiffer>
    <experiments>3</experiments>
</comment>
<comment type="subcellular location">
    <subcellularLocation>
        <location evidence="4">Nucleus</location>
    </subcellularLocation>
</comment>
<comment type="alternative products">
    <event type="alternative splicing"/>
    <isoform>
        <id>O82239-1</id>
        <name>1</name>
        <sequence type="displayed"/>
    </isoform>
    <isoform>
        <id>O82239-2</id>
        <name>2</name>
        <sequence type="described" ref="VSP_058959 VSP_058960"/>
    </isoform>
</comment>
<comment type="induction">
    <text evidence="5">Levels are following a circadian rhythm oscillated under day/night cycles with higher levels during the night.</text>
</comment>
<comment type="disruption phenotype">
    <text evidence="4 5">Photomorphogenic mutant insensitive to red and far-red light leading to long hypocotyls. Flowers early particularly under long days (PubMed:16384903, PubMed:16709197). Also impaired in phytochrome-mediated end-of-day far-red light response, cotyledon expansion, far-red light block of greening, and light-induced expression of LHCB3 and CHALCONE SYNTHASE (CHS) (PubMed:16384903). Enhanced expression of CONSTANS (CO) and FLOWERING LOCUS T (FT) under long days and short days (PubMed:16709197).</text>
</comment>
<name>RFI2_ARATH</name>
<reference key="1">
    <citation type="journal article" date="2005" name="Plant Physiol.">
        <title>Functional analysis of the RING-type ubiquitin ligase family of Arabidopsis.</title>
        <authorList>
            <person name="Stone S.L."/>
            <person name="Hauksdottir H."/>
            <person name="Troy A."/>
            <person name="Herschleb J."/>
            <person name="Kraft E."/>
            <person name="Callis J."/>
        </authorList>
    </citation>
    <scope>NUCLEOTIDE SEQUENCE [MRNA]</scope>
    <scope>CATALYTIC ACTIVITY</scope>
    <scope>GENE FAMILY</scope>
    <source>
        <strain>cv. Columbia</strain>
    </source>
</reference>
<reference key="2">
    <citation type="journal article" date="1999" name="Nature">
        <title>Sequence and analysis of chromosome 2 of the plant Arabidopsis thaliana.</title>
        <authorList>
            <person name="Lin X."/>
            <person name="Kaul S."/>
            <person name="Rounsley S.D."/>
            <person name="Shea T.P."/>
            <person name="Benito M.-I."/>
            <person name="Town C.D."/>
            <person name="Fujii C.Y."/>
            <person name="Mason T.M."/>
            <person name="Bowman C.L."/>
            <person name="Barnstead M.E."/>
            <person name="Feldblyum T.V."/>
            <person name="Buell C.R."/>
            <person name="Ketchum K.A."/>
            <person name="Lee J.J."/>
            <person name="Ronning C.M."/>
            <person name="Koo H.L."/>
            <person name="Moffat K.S."/>
            <person name="Cronin L.A."/>
            <person name="Shen M."/>
            <person name="Pai G."/>
            <person name="Van Aken S."/>
            <person name="Umayam L."/>
            <person name="Tallon L.J."/>
            <person name="Gill J.E."/>
            <person name="Adams M.D."/>
            <person name="Carrera A.J."/>
            <person name="Creasy T.H."/>
            <person name="Goodman H.M."/>
            <person name="Somerville C.R."/>
            <person name="Copenhaver G.P."/>
            <person name="Preuss D."/>
            <person name="Nierman W.C."/>
            <person name="White O."/>
            <person name="Eisen J.A."/>
            <person name="Salzberg S.L."/>
            <person name="Fraser C.M."/>
            <person name="Venter J.C."/>
        </authorList>
    </citation>
    <scope>NUCLEOTIDE SEQUENCE [LARGE SCALE GENOMIC DNA]</scope>
    <source>
        <strain>cv. Columbia</strain>
    </source>
</reference>
<reference key="3">
    <citation type="journal article" date="2017" name="Plant J.">
        <title>Araport11: a complete reannotation of the Arabidopsis thaliana reference genome.</title>
        <authorList>
            <person name="Cheng C.Y."/>
            <person name="Krishnakumar V."/>
            <person name="Chan A.P."/>
            <person name="Thibaud-Nissen F."/>
            <person name="Schobel S."/>
            <person name="Town C.D."/>
        </authorList>
    </citation>
    <scope>GENOME REANNOTATION</scope>
    <source>
        <strain>cv. Columbia</strain>
    </source>
</reference>
<reference key="4">
    <citation type="journal article" date="2003" name="Science">
        <title>Empirical analysis of transcriptional activity in the Arabidopsis genome.</title>
        <authorList>
            <person name="Yamada K."/>
            <person name="Lim J."/>
            <person name="Dale J.M."/>
            <person name="Chen H."/>
            <person name="Shinn P."/>
            <person name="Palm C.J."/>
            <person name="Southwick A.M."/>
            <person name="Wu H.C."/>
            <person name="Kim C.J."/>
            <person name="Nguyen M."/>
            <person name="Pham P.K."/>
            <person name="Cheuk R.F."/>
            <person name="Karlin-Newmann G."/>
            <person name="Liu S.X."/>
            <person name="Lam B."/>
            <person name="Sakano H."/>
            <person name="Wu T."/>
            <person name="Yu G."/>
            <person name="Miranda M."/>
            <person name="Quach H.L."/>
            <person name="Tripp M."/>
            <person name="Chang C.H."/>
            <person name="Lee J.M."/>
            <person name="Toriumi M.J."/>
            <person name="Chan M.M."/>
            <person name="Tang C.C."/>
            <person name="Onodera C.S."/>
            <person name="Deng J.M."/>
            <person name="Akiyama K."/>
            <person name="Ansari Y."/>
            <person name="Arakawa T."/>
            <person name="Banh J."/>
            <person name="Banno F."/>
            <person name="Bowser L."/>
            <person name="Brooks S.Y."/>
            <person name="Carninci P."/>
            <person name="Chao Q."/>
            <person name="Choy N."/>
            <person name="Enju A."/>
            <person name="Goldsmith A.D."/>
            <person name="Gurjal M."/>
            <person name="Hansen N.F."/>
            <person name="Hayashizaki Y."/>
            <person name="Johnson-Hopson C."/>
            <person name="Hsuan V.W."/>
            <person name="Iida K."/>
            <person name="Karnes M."/>
            <person name="Khan S."/>
            <person name="Koesema E."/>
            <person name="Ishida J."/>
            <person name="Jiang P.X."/>
            <person name="Jones T."/>
            <person name="Kawai J."/>
            <person name="Kamiya A."/>
            <person name="Meyers C."/>
            <person name="Nakajima M."/>
            <person name="Narusaka M."/>
            <person name="Seki M."/>
            <person name="Sakurai T."/>
            <person name="Satou M."/>
            <person name="Tamse R."/>
            <person name="Vaysberg M."/>
            <person name="Wallender E.K."/>
            <person name="Wong C."/>
            <person name="Yamamura Y."/>
            <person name="Yuan S."/>
            <person name="Shinozaki K."/>
            <person name="Davis R.W."/>
            <person name="Theologis A."/>
            <person name="Ecker J.R."/>
        </authorList>
    </citation>
    <scope>NUCLEOTIDE SEQUENCE [LARGE SCALE MRNA]</scope>
    <source>
        <strain>cv. Columbia</strain>
    </source>
</reference>
<reference key="5">
    <citation type="journal article" date="2006" name="Plant J.">
        <title>RFI2, a RING-domain zinc finger protein, negatively regulates CONSTANS expression and photoperiodic flowering.</title>
        <authorList>
            <person name="Chen M."/>
            <person name="Ni M."/>
        </authorList>
    </citation>
    <scope>FUNCTION</scope>
    <scope>DISRUPTION PHENOTYPE</scope>
    <scope>INDUCTION BY CIRCADIAN RHYTHM</scope>
    <source>
        <strain>cv. Columbia</strain>
        <strain>cv. Wassilewskija</strain>
    </source>
</reference>
<reference key="6">
    <citation type="journal article" date="2006" name="Plant Physiol.">
        <title>RED AND FAR-RED INSENSITIVE 2, a RING-domain zinc finger protein, mediates phytochrome-controlled seedling deetiolation responses.</title>
        <authorList>
            <person name="Chen M."/>
            <person name="Ni M."/>
        </authorList>
    </citation>
    <scope>FUNCTION</scope>
    <scope>DISRUPTION PHENOTYPE</scope>
    <scope>SUBCELLULAR LOCATION</scope>
    <source>
        <strain>cv. Columbia</strain>
        <strain>cv. Wassilewskija</strain>
    </source>
</reference>
<accession>O82239</accession>
<accession>A0A1P8B018</accession>
<proteinExistence type="evidence at protein level"/>
<sequence>MAGAKDSGCDDDLRIAGGCDPGKRGNPEDSSSPVEVSCSICLESVLDDGTRSKAKLQCGHQFHLDCIGSAFNMKGAMQCPNCRNVEKGQWLYANGSTRPFPEFSMEDWIPEEDLYGLSYPEMQYRVHWCPFGELSQAAASFEELEPATTTYHTEFHGHHAAAVNHSYLAYVGPGPAATPRTSDNNSTDDHPWNSHSNDHFHQLPVAPQYHHHSPSFSLPAAHVVDGEVDSSAARGLPYAHPFLFSHRSNQRSSPAINSYQGSSTQMREQHHAYNHQRQQHHANGPTLASPLISMTRRGLPPPPPPPPMPDQNVGFFIYPGGHHEPETDQIHAWERDWFPHFPVPSNHRTIPSLWHRHF</sequence>
<protein>
    <recommendedName>
        <fullName evidence="6">E3 ubiquitin-protein ligase RFI2</fullName>
        <ecNumber evidence="3">2.3.2.27</ecNumber>
    </recommendedName>
    <alternativeName>
        <fullName evidence="6">Protein RED AND FAR-RED INSENSITIVE 2</fullName>
    </alternativeName>
</protein>